<gene>
    <name type="primary">proP</name>
    <name type="ordered locus">SH2414</name>
</gene>
<proteinExistence type="inferred from homology"/>
<keyword id="KW-1003">Cell membrane</keyword>
<keyword id="KW-0472">Membrane</keyword>
<keyword id="KW-0769">Symport</keyword>
<keyword id="KW-0812">Transmembrane</keyword>
<keyword id="KW-1133">Transmembrane helix</keyword>
<keyword id="KW-0813">Transport</keyword>
<protein>
    <recommendedName>
        <fullName>Putative proline/betaine transporter</fullName>
    </recommendedName>
</protein>
<feature type="chain" id="PRO_0000050335" description="Putative proline/betaine transporter">
    <location>
        <begin position="1"/>
        <end position="468"/>
    </location>
</feature>
<feature type="transmembrane region" description="Helical" evidence="2">
    <location>
        <begin position="20"/>
        <end position="42"/>
    </location>
</feature>
<feature type="transmembrane region" description="Helical" evidence="2">
    <location>
        <begin position="63"/>
        <end position="83"/>
    </location>
</feature>
<feature type="transmembrane region" description="Helical" evidence="2">
    <location>
        <begin position="91"/>
        <end position="111"/>
    </location>
</feature>
<feature type="transmembrane region" description="Helical" evidence="2">
    <location>
        <begin position="115"/>
        <end position="135"/>
    </location>
</feature>
<feature type="transmembrane region" description="Helical" evidence="2">
    <location>
        <begin position="164"/>
        <end position="184"/>
    </location>
</feature>
<feature type="transmembrane region" description="Helical" evidence="2">
    <location>
        <begin position="191"/>
        <end position="211"/>
    </location>
</feature>
<feature type="transmembrane region" description="Helical" evidence="2">
    <location>
        <begin position="246"/>
        <end position="266"/>
    </location>
</feature>
<feature type="transmembrane region" description="Helical" evidence="2">
    <location>
        <begin position="284"/>
        <end position="304"/>
    </location>
</feature>
<feature type="transmembrane region" description="Helical" evidence="2">
    <location>
        <begin position="312"/>
        <end position="332"/>
    </location>
</feature>
<feature type="transmembrane region" description="Helical" evidence="2">
    <location>
        <begin position="336"/>
        <end position="356"/>
    </location>
</feature>
<feature type="transmembrane region" description="Helical" evidence="2">
    <location>
        <begin position="376"/>
        <end position="396"/>
    </location>
</feature>
<feature type="transmembrane region" description="Helical" evidence="2">
    <location>
        <begin position="403"/>
        <end position="423"/>
    </location>
</feature>
<sequence>MDFKKDRINMVDGQTAKKTVFATGIGNAMEWFDFGVYAYTTAYIGANFFSPVQNPEIQQIFTFAALAIAFLLRPIGGIVFGIIGDKYGRKVVLTTTIILMALSTLTIGVLPNYDMIGLWAPALLLLARILQGFSTGGEYAGAMTYIAEISPDKKRNSLGSGLEIGTLSGYIAASIMIALLSFFLSDAQMEAWGWRIPFILGLFLGLFGLYLRRKLEESPIYENDVETPARDNIGFFTIIRYYFKDILVCFVAVVFFNVTNYTVTAYLPTYLGQIVKIDETTTSVLITCVMAVMIPLALFFGKLADKIGEKKVFLIGTGGLTLLSIVAFSLLNTKSLPFIILGVFILGFFLSTYEATMPGSLPTMFFTHIRYRTLAVTFNISVSLFGGTTPLVNSWLVESTGNIYAPAYYLTAISIIGFIVIAVLHVSTAGKSLKGSYPNVDNKKDLEFYESNPKKALWWIKVKKNKNA</sequence>
<comment type="function">
    <text evidence="1">May be a proton symporter involved in the uptake of osmolytes such as proline and glycine betaine.</text>
</comment>
<comment type="subcellular location">
    <subcellularLocation>
        <location evidence="3">Cell membrane</location>
        <topology evidence="3">Multi-pass membrane protein</topology>
    </subcellularLocation>
</comment>
<comment type="similarity">
    <text evidence="3">Belongs to the major facilitator superfamily. Metabolite:H+ Symporter (MHS) family (TC 2.A.1.6) family.</text>
</comment>
<accession>Q4L3Q4</accession>
<reference key="1">
    <citation type="journal article" date="2005" name="J. Bacteriol.">
        <title>Whole-genome sequencing of Staphylococcus haemolyticus uncovers the extreme plasticity of its genome and the evolution of human-colonizing staphylococcal species.</title>
        <authorList>
            <person name="Takeuchi F."/>
            <person name="Watanabe S."/>
            <person name="Baba T."/>
            <person name="Yuzawa H."/>
            <person name="Ito T."/>
            <person name="Morimoto Y."/>
            <person name="Kuroda M."/>
            <person name="Cui L."/>
            <person name="Takahashi M."/>
            <person name="Ankai A."/>
            <person name="Baba S."/>
            <person name="Fukui S."/>
            <person name="Lee J.C."/>
            <person name="Hiramatsu K."/>
        </authorList>
    </citation>
    <scope>NUCLEOTIDE SEQUENCE [LARGE SCALE GENOMIC DNA]</scope>
    <source>
        <strain>JCSC1435</strain>
    </source>
</reference>
<name>PROP_STAHJ</name>
<organism>
    <name type="scientific">Staphylococcus haemolyticus (strain JCSC1435)</name>
    <dbReference type="NCBI Taxonomy" id="279808"/>
    <lineage>
        <taxon>Bacteria</taxon>
        <taxon>Bacillati</taxon>
        <taxon>Bacillota</taxon>
        <taxon>Bacilli</taxon>
        <taxon>Bacillales</taxon>
        <taxon>Staphylococcaceae</taxon>
        <taxon>Staphylococcus</taxon>
    </lineage>
</organism>
<dbReference type="EMBL" id="AP006716">
    <property type="protein sequence ID" value="BAE05723.1"/>
    <property type="molecule type" value="Genomic_DNA"/>
</dbReference>
<dbReference type="RefSeq" id="WP_011276669.1">
    <property type="nucleotide sequence ID" value="NC_007168.1"/>
</dbReference>
<dbReference type="SMR" id="Q4L3Q4"/>
<dbReference type="GeneID" id="93781636"/>
<dbReference type="KEGG" id="sha:SH2414"/>
<dbReference type="eggNOG" id="COG0477">
    <property type="taxonomic scope" value="Bacteria"/>
</dbReference>
<dbReference type="HOGENOM" id="CLU_001265_39_5_9"/>
<dbReference type="OrthoDB" id="9783227at2"/>
<dbReference type="Proteomes" id="UP000000543">
    <property type="component" value="Chromosome"/>
</dbReference>
<dbReference type="GO" id="GO:0005886">
    <property type="term" value="C:plasma membrane"/>
    <property type="evidence" value="ECO:0007669"/>
    <property type="project" value="UniProtKB-SubCell"/>
</dbReference>
<dbReference type="GO" id="GO:0015293">
    <property type="term" value="F:symporter activity"/>
    <property type="evidence" value="ECO:0007669"/>
    <property type="project" value="UniProtKB-KW"/>
</dbReference>
<dbReference type="FunFam" id="1.20.1250.20:FF:000001">
    <property type="entry name" value="Dicarboxylate MFS transporter"/>
    <property type="match status" value="1"/>
</dbReference>
<dbReference type="Gene3D" id="1.20.1250.20">
    <property type="entry name" value="MFS general substrate transporter like domains"/>
    <property type="match status" value="2"/>
</dbReference>
<dbReference type="InterPro" id="IPR051084">
    <property type="entry name" value="H+-coupled_symporters"/>
</dbReference>
<dbReference type="InterPro" id="IPR011701">
    <property type="entry name" value="MFS"/>
</dbReference>
<dbReference type="InterPro" id="IPR020846">
    <property type="entry name" value="MFS_dom"/>
</dbReference>
<dbReference type="InterPro" id="IPR005828">
    <property type="entry name" value="MFS_sugar_transport-like"/>
</dbReference>
<dbReference type="InterPro" id="IPR036259">
    <property type="entry name" value="MFS_trans_sf"/>
</dbReference>
<dbReference type="InterPro" id="IPR005829">
    <property type="entry name" value="Sugar_transporter_CS"/>
</dbReference>
<dbReference type="PANTHER" id="PTHR43528">
    <property type="entry name" value="ALPHA-KETOGLUTARATE PERMEASE"/>
    <property type="match status" value="1"/>
</dbReference>
<dbReference type="PANTHER" id="PTHR43528:SF1">
    <property type="entry name" value="ALPHA-KETOGLUTARATE PERMEASE"/>
    <property type="match status" value="1"/>
</dbReference>
<dbReference type="Pfam" id="PF07690">
    <property type="entry name" value="MFS_1"/>
    <property type="match status" value="1"/>
</dbReference>
<dbReference type="Pfam" id="PF00083">
    <property type="entry name" value="Sugar_tr"/>
    <property type="match status" value="1"/>
</dbReference>
<dbReference type="SUPFAM" id="SSF103473">
    <property type="entry name" value="MFS general substrate transporter"/>
    <property type="match status" value="1"/>
</dbReference>
<dbReference type="PROSITE" id="PS50850">
    <property type="entry name" value="MFS"/>
    <property type="match status" value="1"/>
</dbReference>
<dbReference type="PROSITE" id="PS00217">
    <property type="entry name" value="SUGAR_TRANSPORT_2"/>
    <property type="match status" value="1"/>
</dbReference>
<evidence type="ECO:0000250" key="1"/>
<evidence type="ECO:0000255" key="2"/>
<evidence type="ECO:0000305" key="3"/>